<sequence>MAERGELDLTGAKQNTGVWLVKVPKYLSQQWAKAPGRGEVGKLRIAKNQGRTEVSFTLNEDLANIHDIGGKPASVSAPREHPFVLQSVGGQTLTVFTESSSDKLSLEGIVVQRAECRPAASENYMKLKRLQIEESSKPVRLSQQADKVVTTNYKPVANHQYNIEYERKKKEDGKRARADKQHVLDMLFSAFEKHQYYNLKDLVDITKQPVGYLKEILKEIGIQNVKGIHKNTWELKPEYRHYQTEEKSD</sequence>
<name>T2FB_RAT</name>
<evidence type="ECO:0000250" key="1"/>
<evidence type="ECO:0000250" key="2">
    <source>
        <dbReference type="UniProtKB" id="P13984"/>
    </source>
</evidence>
<evidence type="ECO:0000305" key="3"/>
<evidence type="ECO:0007744" key="4">
    <source>
    </source>
</evidence>
<reference key="1">
    <citation type="journal article" date="1992" name="J. Biol. Chem.">
        <title>The carboxyl terminus of RAP30 is similar in sequence to region 4 of bacterial sigma factors and is required for function.</title>
        <authorList>
            <person name="Garrett K.P."/>
            <person name="Serizawa H."/>
            <person name="Hanley J.P."/>
            <person name="Bradsher J.N."/>
            <person name="Tsuboi A."/>
            <person name="Arai N."/>
            <person name="Yokota T."/>
            <person name="Arai K."/>
            <person name="Conaway R.C."/>
            <person name="Conaway J.W."/>
        </authorList>
    </citation>
    <scope>NUCLEOTIDE SEQUENCE [MRNA]</scope>
</reference>
<reference key="2">
    <citation type="journal article" date="2012" name="Nat. Commun.">
        <title>Quantitative maps of protein phosphorylation sites across 14 different rat organs and tissues.</title>
        <authorList>
            <person name="Lundby A."/>
            <person name="Secher A."/>
            <person name="Lage K."/>
            <person name="Nordsborg N.B."/>
            <person name="Dmytriyev A."/>
            <person name="Lundby C."/>
            <person name="Olsen J.V."/>
        </authorList>
    </citation>
    <scope>PHOSPHORYLATION [LARGE SCALE ANALYSIS] AT SER-248</scope>
    <scope>IDENTIFICATION BY MASS SPECTROMETRY [LARGE SCALE ANALYSIS]</scope>
</reference>
<comment type="function">
    <text evidence="2">TFIIF is a general transcription initiation factor that binds to RNA polymerase II and helps to recruit it to the initiation complex in collaboration with TFIIB. It promotes transcription elongation.</text>
</comment>
<comment type="subunit">
    <text evidence="1 2">Heterodimer of an alpha and a beta subunit. Interacts with HTATSF1 and GPBP1 (By similarity). Interacts with URI1. Interacts with GTF2B (via N-terminus); this interaction is inhibited in presence of GTF2F1. Part of TBP-based Pol II pre-initiation complex (PIC), in which Pol II core assembles with general transcription factors and other specific initiation factors including GTF2E1, GTF2E2, GTF2F1, GTF2F2, TCEA1, ERCC2, ERCC3, GTF2H2, GTF2H3, GTF2H4, GTF2H5, GTF2A1, GTF2A2, GTF2B and TBP; this large multi-subunit PIC complex mediates DNA unwinding and targets Pol II core to the transcription start site where the first phosphodiester bond forms (By similarity).</text>
</comment>
<comment type="subcellular location">
    <subcellularLocation>
        <location>Nucleus</location>
    </subcellularLocation>
</comment>
<comment type="similarity">
    <text evidence="3">Belongs to the TFIIF beta subunit family.</text>
</comment>
<accession>Q01750</accession>
<dbReference type="EMBL" id="L01267">
    <property type="protein sequence ID" value="AAA42005.1"/>
    <property type="molecule type" value="mRNA"/>
</dbReference>
<dbReference type="SMR" id="Q01750"/>
<dbReference type="FunCoup" id="Q01750">
    <property type="interactions" value="2307"/>
</dbReference>
<dbReference type="STRING" id="10116.ENSRNOP00000044668"/>
<dbReference type="iPTMnet" id="Q01750"/>
<dbReference type="PhosphoSitePlus" id="Q01750"/>
<dbReference type="PaxDb" id="10116-ENSRNOP00000044668"/>
<dbReference type="UCSC" id="RGD:620772">
    <property type="organism name" value="rat"/>
</dbReference>
<dbReference type="AGR" id="RGD:620772"/>
<dbReference type="RGD" id="620772">
    <property type="gene designation" value="Gtf2f2"/>
</dbReference>
<dbReference type="eggNOG" id="KOG2905">
    <property type="taxonomic scope" value="Eukaryota"/>
</dbReference>
<dbReference type="InParanoid" id="Q01750"/>
<dbReference type="PhylomeDB" id="Q01750"/>
<dbReference type="Reactome" id="R-RNO-112382">
    <property type="pathway name" value="Formation of RNA Pol II elongation complex"/>
</dbReference>
<dbReference type="Reactome" id="R-RNO-113418">
    <property type="pathway name" value="Formation of the Early Elongation Complex"/>
</dbReference>
<dbReference type="Reactome" id="R-RNO-674695">
    <property type="pathway name" value="RNA Polymerase II Pre-transcription Events"/>
</dbReference>
<dbReference type="Reactome" id="R-RNO-6796648">
    <property type="pathway name" value="TP53 Regulates Transcription of DNA Repair Genes"/>
</dbReference>
<dbReference type="Reactome" id="R-RNO-6803529">
    <property type="pathway name" value="FGFR2 alternative splicing"/>
</dbReference>
<dbReference type="Reactome" id="R-RNO-6807505">
    <property type="pathway name" value="RNA polymerase II transcribes snRNA genes"/>
</dbReference>
<dbReference type="Reactome" id="R-RNO-72086">
    <property type="pathway name" value="mRNA Capping"/>
</dbReference>
<dbReference type="Reactome" id="R-RNO-72163">
    <property type="pathway name" value="mRNA Splicing - Major Pathway"/>
</dbReference>
<dbReference type="Reactome" id="R-RNO-72165">
    <property type="pathway name" value="mRNA Splicing - Minor Pathway"/>
</dbReference>
<dbReference type="Reactome" id="R-RNO-72203">
    <property type="pathway name" value="Processing of Capped Intron-Containing Pre-mRNA"/>
</dbReference>
<dbReference type="Reactome" id="R-RNO-73776">
    <property type="pathway name" value="RNA Polymerase II Promoter Escape"/>
</dbReference>
<dbReference type="Reactome" id="R-RNO-73779">
    <property type="pathway name" value="RNA Polymerase II Transcription Pre-Initiation And Promoter Opening"/>
</dbReference>
<dbReference type="Reactome" id="R-RNO-75953">
    <property type="pathway name" value="RNA Polymerase II Transcription Initiation"/>
</dbReference>
<dbReference type="Reactome" id="R-RNO-75955">
    <property type="pathway name" value="RNA Polymerase II Transcription Elongation"/>
</dbReference>
<dbReference type="Reactome" id="R-RNO-76042">
    <property type="pathway name" value="RNA Polymerase II Transcription Initiation And Promoter Clearance"/>
</dbReference>
<dbReference type="Reactome" id="R-RNO-77075">
    <property type="pathway name" value="RNA Pol II CTD phosphorylation and interaction with CE"/>
</dbReference>
<dbReference type="Reactome" id="R-RNO-9018519">
    <property type="pathway name" value="Estrogen-dependent gene expression"/>
</dbReference>
<dbReference type="PRO" id="PR:Q01750"/>
<dbReference type="Proteomes" id="UP000002494">
    <property type="component" value="Unplaced"/>
</dbReference>
<dbReference type="GO" id="GO:0005634">
    <property type="term" value="C:nucleus"/>
    <property type="evidence" value="ECO:0000266"/>
    <property type="project" value="RGD"/>
</dbReference>
<dbReference type="GO" id="GO:0005674">
    <property type="term" value="C:transcription factor TFIIF complex"/>
    <property type="evidence" value="ECO:0000266"/>
    <property type="project" value="RGD"/>
</dbReference>
<dbReference type="GO" id="GO:0005675">
    <property type="term" value="C:transcription factor TFIIH holo complex"/>
    <property type="evidence" value="ECO:0000314"/>
    <property type="project" value="RGD"/>
</dbReference>
<dbReference type="GO" id="GO:0003677">
    <property type="term" value="F:DNA binding"/>
    <property type="evidence" value="ECO:0007669"/>
    <property type="project" value="UniProtKB-KW"/>
</dbReference>
<dbReference type="GO" id="GO:0016251">
    <property type="term" value="F:RNA polymerase II general transcription initiation factor activity"/>
    <property type="evidence" value="ECO:0000314"/>
    <property type="project" value="ARUK-UCL"/>
</dbReference>
<dbReference type="GO" id="GO:0045944">
    <property type="term" value="P:positive regulation of transcription by RNA polymerase II"/>
    <property type="evidence" value="ECO:0000266"/>
    <property type="project" value="RGD"/>
</dbReference>
<dbReference type="GO" id="GO:0051123">
    <property type="term" value="P:RNA polymerase II preinitiation complex assembly"/>
    <property type="evidence" value="ECO:0000314"/>
    <property type="project" value="RGD"/>
</dbReference>
<dbReference type="GO" id="GO:0006366">
    <property type="term" value="P:transcription by RNA polymerase II"/>
    <property type="evidence" value="ECO:0000314"/>
    <property type="project" value="RGD"/>
</dbReference>
<dbReference type="GO" id="GO:0006368">
    <property type="term" value="P:transcription elongation by RNA polymerase II"/>
    <property type="evidence" value="ECO:0000314"/>
    <property type="project" value="RGD"/>
</dbReference>
<dbReference type="GO" id="GO:0006367">
    <property type="term" value="P:transcription initiation at RNA polymerase II promoter"/>
    <property type="evidence" value="ECO:0000314"/>
    <property type="project" value="ARUK-UCL"/>
</dbReference>
<dbReference type="CDD" id="cd07980">
    <property type="entry name" value="TFIIF_beta"/>
    <property type="match status" value="1"/>
</dbReference>
<dbReference type="FunFam" id="1.10.10.10:FF:000035">
    <property type="entry name" value="General transcription factor IIF subunit 2"/>
    <property type="match status" value="1"/>
</dbReference>
<dbReference type="Gene3D" id="1.10.10.10">
    <property type="entry name" value="Winged helix-like DNA-binding domain superfamily/Winged helix DNA-binding domain"/>
    <property type="match status" value="1"/>
</dbReference>
<dbReference type="InterPro" id="IPR003196">
    <property type="entry name" value="TFIIF_beta"/>
</dbReference>
<dbReference type="InterPro" id="IPR040450">
    <property type="entry name" value="TFIIF_beta_HTH"/>
</dbReference>
<dbReference type="InterPro" id="IPR040504">
    <property type="entry name" value="TFIIF_beta_N"/>
</dbReference>
<dbReference type="InterPro" id="IPR011039">
    <property type="entry name" value="TFIIF_interaction"/>
</dbReference>
<dbReference type="InterPro" id="IPR036388">
    <property type="entry name" value="WH-like_DNA-bd_sf"/>
</dbReference>
<dbReference type="InterPro" id="IPR036390">
    <property type="entry name" value="WH_DNA-bd_sf"/>
</dbReference>
<dbReference type="PANTHER" id="PTHR10445">
    <property type="entry name" value="GENERAL TRANSCRIPTION FACTOR IIF SUBUNIT 2"/>
    <property type="match status" value="1"/>
</dbReference>
<dbReference type="PANTHER" id="PTHR10445:SF0">
    <property type="entry name" value="GENERAL TRANSCRIPTION FACTOR IIF SUBUNIT 2"/>
    <property type="match status" value="1"/>
</dbReference>
<dbReference type="Pfam" id="PF02270">
    <property type="entry name" value="TFIIF_beta"/>
    <property type="match status" value="1"/>
</dbReference>
<dbReference type="Pfam" id="PF17683">
    <property type="entry name" value="TFIIF_beta_N"/>
    <property type="match status" value="1"/>
</dbReference>
<dbReference type="PIRSF" id="PIRSF015849">
    <property type="entry name" value="TFIIF-beta"/>
    <property type="match status" value="1"/>
</dbReference>
<dbReference type="SUPFAM" id="SSF50916">
    <property type="entry name" value="Rap30/74 interaction domains"/>
    <property type="match status" value="1"/>
</dbReference>
<dbReference type="SUPFAM" id="SSF46785">
    <property type="entry name" value="Winged helix' DNA-binding domain"/>
    <property type="match status" value="1"/>
</dbReference>
<proteinExistence type="evidence at protein level"/>
<protein>
    <recommendedName>
        <fullName>General transcription factor IIF subunit 2</fullName>
    </recommendedName>
    <alternativeName>
        <fullName>Transcription initiation factor IIF subunit beta</fullName>
        <shortName>TFIIF-beta</shortName>
    </alternativeName>
    <alternativeName>
        <fullName>Transcription initiation factor RAP30</fullName>
    </alternativeName>
</protein>
<organism>
    <name type="scientific">Rattus norvegicus</name>
    <name type="common">Rat</name>
    <dbReference type="NCBI Taxonomy" id="10116"/>
    <lineage>
        <taxon>Eukaryota</taxon>
        <taxon>Metazoa</taxon>
        <taxon>Chordata</taxon>
        <taxon>Craniata</taxon>
        <taxon>Vertebrata</taxon>
        <taxon>Euteleostomi</taxon>
        <taxon>Mammalia</taxon>
        <taxon>Eutheria</taxon>
        <taxon>Euarchontoglires</taxon>
        <taxon>Glires</taxon>
        <taxon>Rodentia</taxon>
        <taxon>Myomorpha</taxon>
        <taxon>Muroidea</taxon>
        <taxon>Muridae</taxon>
        <taxon>Murinae</taxon>
        <taxon>Rattus</taxon>
    </lineage>
</organism>
<gene>
    <name type="primary">Gtf2f2</name>
    <name type="synonym">Rap30</name>
</gene>
<keyword id="KW-0007">Acetylation</keyword>
<keyword id="KW-0238">DNA-binding</keyword>
<keyword id="KW-0539">Nucleus</keyword>
<keyword id="KW-0597">Phosphoprotein</keyword>
<keyword id="KW-1185">Reference proteome</keyword>
<keyword id="KW-0804">Transcription</keyword>
<keyword id="KW-0805">Transcription regulation</keyword>
<feature type="initiator methionine" description="Removed" evidence="2">
    <location>
        <position position="1"/>
    </location>
</feature>
<feature type="chain" id="PRO_0000211237" description="General transcription factor IIF subunit 2">
    <location>
        <begin position="2"/>
        <end position="249"/>
    </location>
</feature>
<feature type="binding site" evidence="2">
    <location>
        <position position="227"/>
    </location>
    <ligand>
        <name>DNA</name>
        <dbReference type="ChEBI" id="CHEBI:16991"/>
    </ligand>
</feature>
<feature type="binding site" evidence="2">
    <location>
        <position position="229"/>
    </location>
    <ligand>
        <name>DNA</name>
        <dbReference type="ChEBI" id="CHEBI:16991"/>
    </ligand>
</feature>
<feature type="modified residue" description="N-acetylalanine" evidence="2">
    <location>
        <position position="2"/>
    </location>
</feature>
<feature type="modified residue" description="N6-acetyllysine" evidence="2">
    <location>
        <position position="22"/>
    </location>
</feature>
<feature type="modified residue" description="N6-acetyllysine" evidence="2">
    <location>
        <position position="33"/>
    </location>
</feature>
<feature type="modified residue" description="N6-acetyllysine" evidence="2">
    <location>
        <position position="137"/>
    </location>
</feature>
<feature type="modified residue" description="Phosphoserine" evidence="2">
    <location>
        <position position="142"/>
    </location>
</feature>
<feature type="modified residue" description="Phosphoserine" evidence="4">
    <location>
        <position position="248"/>
    </location>
</feature>